<evidence type="ECO:0000255" key="1">
    <source>
        <dbReference type="HAMAP-Rule" id="MF_01591"/>
    </source>
</evidence>
<evidence type="ECO:0000305" key="2"/>
<sequence>MEYFDMRKMSVNLWRNAAGETREICTFPPAKRDFYWRASIASIAANGEFSLFPGMERIVTLLEGGEMLLESADRFNHTLKPLQPFAFAADQVVKAKLTEGQMSMDFNIMTRLDVCKAKVRIAERTFTTFGSRGGVVFVINGAWQLGDKLLTTDQGACWFDGRHTLRLLQPQGKLLFSEINWLAGHSPDQVQ</sequence>
<proteinExistence type="inferred from homology"/>
<protein>
    <recommendedName>
        <fullName evidence="1">Protein Ves</fullName>
    </recommendedName>
</protein>
<organism>
    <name type="scientific">Shigella boydii serotype 4 (strain Sb227)</name>
    <dbReference type="NCBI Taxonomy" id="300268"/>
    <lineage>
        <taxon>Bacteria</taxon>
        <taxon>Pseudomonadati</taxon>
        <taxon>Pseudomonadota</taxon>
        <taxon>Gammaproteobacteria</taxon>
        <taxon>Enterobacterales</taxon>
        <taxon>Enterobacteriaceae</taxon>
        <taxon>Shigella</taxon>
    </lineage>
</organism>
<gene>
    <name evidence="1" type="primary">ves</name>
    <name type="ordered locus">SBO_1348</name>
</gene>
<comment type="similarity">
    <text evidence="1">Belongs to the Ves family.</text>
</comment>
<comment type="sequence caution" evidence="2">
    <conflict type="erroneous initiation">
        <sequence resource="EMBL-CDS" id="ABB65974"/>
    </conflict>
</comment>
<dbReference type="EMBL" id="CP000036">
    <property type="protein sequence ID" value="ABB65974.1"/>
    <property type="status" value="ALT_INIT"/>
    <property type="molecule type" value="Genomic_DNA"/>
</dbReference>
<dbReference type="RefSeq" id="WP_004983350.1">
    <property type="nucleotide sequence ID" value="NC_007613.1"/>
</dbReference>
<dbReference type="SMR" id="Q321N4"/>
<dbReference type="GeneID" id="93775955"/>
<dbReference type="KEGG" id="sbo:SBO_1348"/>
<dbReference type="HOGENOM" id="CLU_090931_5_0_6"/>
<dbReference type="Proteomes" id="UP000007067">
    <property type="component" value="Chromosome"/>
</dbReference>
<dbReference type="CDD" id="cd20293">
    <property type="entry name" value="cupin_HutD_N"/>
    <property type="match status" value="1"/>
</dbReference>
<dbReference type="Gene3D" id="2.60.120.10">
    <property type="entry name" value="Jelly Rolls"/>
    <property type="match status" value="1"/>
</dbReference>
<dbReference type="HAMAP" id="MF_01591">
    <property type="entry name" value="Ves"/>
    <property type="match status" value="1"/>
</dbReference>
<dbReference type="InterPro" id="IPR014710">
    <property type="entry name" value="RmlC-like_jellyroll"/>
</dbReference>
<dbReference type="InterPro" id="IPR011051">
    <property type="entry name" value="RmlC_Cupin_sf"/>
</dbReference>
<dbReference type="InterPro" id="IPR010282">
    <property type="entry name" value="Uncharacterised_HutD/Ves"/>
</dbReference>
<dbReference type="InterPro" id="IPR023482">
    <property type="entry name" value="Uncharacterised_Ves"/>
</dbReference>
<dbReference type="NCBIfam" id="NF008488">
    <property type="entry name" value="PRK11396.1"/>
    <property type="match status" value="1"/>
</dbReference>
<dbReference type="PANTHER" id="PTHR37943">
    <property type="entry name" value="PROTEIN VES"/>
    <property type="match status" value="1"/>
</dbReference>
<dbReference type="PANTHER" id="PTHR37943:SF1">
    <property type="entry name" value="PROTEIN VES"/>
    <property type="match status" value="1"/>
</dbReference>
<dbReference type="Pfam" id="PF05962">
    <property type="entry name" value="HutD"/>
    <property type="match status" value="1"/>
</dbReference>
<dbReference type="SUPFAM" id="SSF51182">
    <property type="entry name" value="RmlC-like cupins"/>
    <property type="match status" value="1"/>
</dbReference>
<reference key="1">
    <citation type="journal article" date="2005" name="Nucleic Acids Res.">
        <title>Genome dynamics and diversity of Shigella species, the etiologic agents of bacillary dysentery.</title>
        <authorList>
            <person name="Yang F."/>
            <person name="Yang J."/>
            <person name="Zhang X."/>
            <person name="Chen L."/>
            <person name="Jiang Y."/>
            <person name="Yan Y."/>
            <person name="Tang X."/>
            <person name="Wang J."/>
            <person name="Xiong Z."/>
            <person name="Dong J."/>
            <person name="Xue Y."/>
            <person name="Zhu Y."/>
            <person name="Xu X."/>
            <person name="Sun L."/>
            <person name="Chen S."/>
            <person name="Nie H."/>
            <person name="Peng J."/>
            <person name="Xu J."/>
            <person name="Wang Y."/>
            <person name="Yuan Z."/>
            <person name="Wen Y."/>
            <person name="Yao Z."/>
            <person name="Shen Y."/>
            <person name="Qiang B."/>
            <person name="Hou Y."/>
            <person name="Yu J."/>
            <person name="Jin Q."/>
        </authorList>
    </citation>
    <scope>NUCLEOTIDE SEQUENCE [LARGE SCALE GENOMIC DNA]</scope>
    <source>
        <strain>Sb227</strain>
    </source>
</reference>
<feature type="chain" id="PRO_0000315008" description="Protein Ves">
    <location>
        <begin position="1"/>
        <end position="191"/>
    </location>
</feature>
<accession>Q321N4</accession>
<name>VES_SHIBS</name>